<comment type="function">
    <text evidence="1">Catalyzes the transfer of the phosphoribosyl group of 5-phosphorylribose-1-pyrophosphate (PRPP) to anthranilate to yield N-(5'-phosphoribosyl)-anthranilate (PRA).</text>
</comment>
<comment type="catalytic activity">
    <reaction evidence="1">
        <text>N-(5-phospho-beta-D-ribosyl)anthranilate + diphosphate = 5-phospho-alpha-D-ribose 1-diphosphate + anthranilate</text>
        <dbReference type="Rhea" id="RHEA:11768"/>
        <dbReference type="ChEBI" id="CHEBI:16567"/>
        <dbReference type="ChEBI" id="CHEBI:18277"/>
        <dbReference type="ChEBI" id="CHEBI:33019"/>
        <dbReference type="ChEBI" id="CHEBI:58017"/>
        <dbReference type="EC" id="2.4.2.18"/>
    </reaction>
</comment>
<comment type="cofactor">
    <cofactor evidence="1">
        <name>Mg(2+)</name>
        <dbReference type="ChEBI" id="CHEBI:18420"/>
    </cofactor>
    <text evidence="1">Binds 2 magnesium ions per monomer.</text>
</comment>
<comment type="pathway">
    <text evidence="1">Amino-acid biosynthesis; L-tryptophan biosynthesis; L-tryptophan from chorismate: step 2/5.</text>
</comment>
<comment type="subunit">
    <text evidence="1">Homodimer.</text>
</comment>
<comment type="similarity">
    <text evidence="1">Belongs to the anthranilate phosphoribosyltransferase family.</text>
</comment>
<accession>B1VZR5</accession>
<sequence length="354" mass="36609">MNVVTPNGGDSVAARSWPGLLNPLLRGEDLSAEETAWAMDRIMSGEATDAQIAGFAVALRAKGETVDEVTGLVRAMYAHANTIEVPGRTVDIVGTGGDLAKTVNISTMSAIVIAGTGAKVVKHGNRAASSASGSSDVLEKLGVNLELTPRRVVEVAEAAGITFCFAVKFHPALRYAAKARKELGAQTTFNILGPLTNPAQVRSQAVGVADARMAPIVAGVLADRGNSALVFRGDDGLDELTTTATSRVWVVRDGVVREEPFDPRDVGLPIVPVEALRGADASYNADVARRLLDGEAGAVREAVLLNSAAALVALDPGTGTLTEQLAAKILVAAEAIDSGAAKQALERWIAASNA</sequence>
<keyword id="KW-0028">Amino-acid biosynthesis</keyword>
<keyword id="KW-0057">Aromatic amino acid biosynthesis</keyword>
<keyword id="KW-0328">Glycosyltransferase</keyword>
<keyword id="KW-0460">Magnesium</keyword>
<keyword id="KW-0479">Metal-binding</keyword>
<keyword id="KW-0808">Transferase</keyword>
<keyword id="KW-0822">Tryptophan biosynthesis</keyword>
<reference key="1">
    <citation type="journal article" date="2008" name="J. Bacteriol.">
        <title>Genome sequence of the streptomycin-producing microorganism Streptomyces griseus IFO 13350.</title>
        <authorList>
            <person name="Ohnishi Y."/>
            <person name="Ishikawa J."/>
            <person name="Hara H."/>
            <person name="Suzuki H."/>
            <person name="Ikenoya M."/>
            <person name="Ikeda H."/>
            <person name="Yamashita A."/>
            <person name="Hattori M."/>
            <person name="Horinouchi S."/>
        </authorList>
    </citation>
    <scope>NUCLEOTIDE SEQUENCE [LARGE SCALE GENOMIC DNA]</scope>
    <source>
        <strain>JCM 4626 / CBS 651.72 / NBRC 13350 / KCC S-0626 / ISP 5235</strain>
    </source>
</reference>
<proteinExistence type="inferred from homology"/>
<organism>
    <name type="scientific">Streptomyces griseus subsp. griseus (strain JCM 4626 / CBS 651.72 / NBRC 13350 / KCC S-0626 / ISP 5235)</name>
    <dbReference type="NCBI Taxonomy" id="455632"/>
    <lineage>
        <taxon>Bacteria</taxon>
        <taxon>Bacillati</taxon>
        <taxon>Actinomycetota</taxon>
        <taxon>Actinomycetes</taxon>
        <taxon>Kitasatosporales</taxon>
        <taxon>Streptomycetaceae</taxon>
        <taxon>Streptomyces</taxon>
    </lineage>
</organism>
<feature type="chain" id="PRO_1000099846" description="Anthranilate phosphoribosyltransferase">
    <location>
        <begin position="1"/>
        <end position="354"/>
    </location>
</feature>
<feature type="binding site" evidence="1">
    <location>
        <position position="94"/>
    </location>
    <ligand>
        <name>5-phospho-alpha-D-ribose 1-diphosphate</name>
        <dbReference type="ChEBI" id="CHEBI:58017"/>
    </ligand>
</feature>
<feature type="binding site" evidence="1">
    <location>
        <position position="94"/>
    </location>
    <ligand>
        <name>anthranilate</name>
        <dbReference type="ChEBI" id="CHEBI:16567"/>
        <label>1</label>
    </ligand>
</feature>
<feature type="binding site" evidence="1">
    <location>
        <begin position="97"/>
        <end position="98"/>
    </location>
    <ligand>
        <name>5-phospho-alpha-D-ribose 1-diphosphate</name>
        <dbReference type="ChEBI" id="CHEBI:58017"/>
    </ligand>
</feature>
<feature type="binding site" evidence="1">
    <location>
        <position position="102"/>
    </location>
    <ligand>
        <name>5-phospho-alpha-D-ribose 1-diphosphate</name>
        <dbReference type="ChEBI" id="CHEBI:58017"/>
    </ligand>
</feature>
<feature type="binding site" evidence="1">
    <location>
        <begin position="104"/>
        <end position="107"/>
    </location>
    <ligand>
        <name>5-phospho-alpha-D-ribose 1-diphosphate</name>
        <dbReference type="ChEBI" id="CHEBI:58017"/>
    </ligand>
</feature>
<feature type="binding site" evidence="1">
    <location>
        <position position="106"/>
    </location>
    <ligand>
        <name>Mg(2+)</name>
        <dbReference type="ChEBI" id="CHEBI:18420"/>
        <label>1</label>
    </ligand>
</feature>
<feature type="binding site" evidence="1">
    <location>
        <begin position="122"/>
        <end position="130"/>
    </location>
    <ligand>
        <name>5-phospho-alpha-D-ribose 1-diphosphate</name>
        <dbReference type="ChEBI" id="CHEBI:58017"/>
    </ligand>
</feature>
<feature type="binding site" evidence="1">
    <location>
        <position position="125"/>
    </location>
    <ligand>
        <name>anthranilate</name>
        <dbReference type="ChEBI" id="CHEBI:16567"/>
        <label>1</label>
    </ligand>
</feature>
<feature type="binding site" evidence="1">
    <location>
        <position position="134"/>
    </location>
    <ligand>
        <name>5-phospho-alpha-D-ribose 1-diphosphate</name>
        <dbReference type="ChEBI" id="CHEBI:58017"/>
    </ligand>
</feature>
<feature type="binding site" evidence="1">
    <location>
        <position position="180"/>
    </location>
    <ligand>
        <name>anthranilate</name>
        <dbReference type="ChEBI" id="CHEBI:16567"/>
        <label>2</label>
    </ligand>
</feature>
<feature type="binding site" evidence="1">
    <location>
        <position position="238"/>
    </location>
    <ligand>
        <name>Mg(2+)</name>
        <dbReference type="ChEBI" id="CHEBI:18420"/>
        <label>2</label>
    </ligand>
</feature>
<feature type="binding site" evidence="1">
    <location>
        <position position="239"/>
    </location>
    <ligand>
        <name>Mg(2+)</name>
        <dbReference type="ChEBI" id="CHEBI:18420"/>
        <label>1</label>
    </ligand>
</feature>
<feature type="binding site" evidence="1">
    <location>
        <position position="239"/>
    </location>
    <ligand>
        <name>Mg(2+)</name>
        <dbReference type="ChEBI" id="CHEBI:18420"/>
        <label>2</label>
    </ligand>
</feature>
<protein>
    <recommendedName>
        <fullName evidence="1">Anthranilate phosphoribosyltransferase</fullName>
        <ecNumber evidence="1">2.4.2.18</ecNumber>
    </recommendedName>
</protein>
<name>TRPD_STRGG</name>
<gene>
    <name evidence="1" type="primary">trpD</name>
    <name type="ordered locus">SGR_5361</name>
</gene>
<evidence type="ECO:0000255" key="1">
    <source>
        <dbReference type="HAMAP-Rule" id="MF_00211"/>
    </source>
</evidence>
<dbReference type="EC" id="2.4.2.18" evidence="1"/>
<dbReference type="EMBL" id="AP009493">
    <property type="protein sequence ID" value="BAG22190.1"/>
    <property type="molecule type" value="Genomic_DNA"/>
</dbReference>
<dbReference type="RefSeq" id="WP_012381267.1">
    <property type="nucleotide sequence ID" value="NC_010572.1"/>
</dbReference>
<dbReference type="SMR" id="B1VZR5"/>
<dbReference type="KEGG" id="sgr:SGR_5361"/>
<dbReference type="PATRIC" id="fig|455632.4.peg.5491"/>
<dbReference type="eggNOG" id="COG0547">
    <property type="taxonomic scope" value="Bacteria"/>
</dbReference>
<dbReference type="HOGENOM" id="CLU_034315_4_1_11"/>
<dbReference type="UniPathway" id="UPA00035">
    <property type="reaction ID" value="UER00041"/>
</dbReference>
<dbReference type="Proteomes" id="UP000001685">
    <property type="component" value="Chromosome"/>
</dbReference>
<dbReference type="GO" id="GO:0005829">
    <property type="term" value="C:cytosol"/>
    <property type="evidence" value="ECO:0007669"/>
    <property type="project" value="TreeGrafter"/>
</dbReference>
<dbReference type="GO" id="GO:0004048">
    <property type="term" value="F:anthranilate phosphoribosyltransferase activity"/>
    <property type="evidence" value="ECO:0007669"/>
    <property type="project" value="UniProtKB-UniRule"/>
</dbReference>
<dbReference type="GO" id="GO:0000287">
    <property type="term" value="F:magnesium ion binding"/>
    <property type="evidence" value="ECO:0007669"/>
    <property type="project" value="UniProtKB-UniRule"/>
</dbReference>
<dbReference type="GO" id="GO:0000162">
    <property type="term" value="P:L-tryptophan biosynthetic process"/>
    <property type="evidence" value="ECO:0007669"/>
    <property type="project" value="UniProtKB-UniRule"/>
</dbReference>
<dbReference type="FunFam" id="3.40.1030.10:FF:000002">
    <property type="entry name" value="Anthranilate phosphoribosyltransferase"/>
    <property type="match status" value="1"/>
</dbReference>
<dbReference type="Gene3D" id="3.40.1030.10">
    <property type="entry name" value="Nucleoside phosphorylase/phosphoribosyltransferase catalytic domain"/>
    <property type="match status" value="1"/>
</dbReference>
<dbReference type="Gene3D" id="1.20.970.10">
    <property type="entry name" value="Transferase, Pyrimidine Nucleoside Phosphorylase, Chain C"/>
    <property type="match status" value="1"/>
</dbReference>
<dbReference type="HAMAP" id="MF_00211">
    <property type="entry name" value="TrpD"/>
    <property type="match status" value="1"/>
</dbReference>
<dbReference type="InterPro" id="IPR005940">
    <property type="entry name" value="Anthranilate_Pribosyl_Tfrase"/>
</dbReference>
<dbReference type="InterPro" id="IPR000312">
    <property type="entry name" value="Glycosyl_Trfase_fam3"/>
</dbReference>
<dbReference type="InterPro" id="IPR017459">
    <property type="entry name" value="Glycosyl_Trfase_fam3_N_dom"/>
</dbReference>
<dbReference type="InterPro" id="IPR036320">
    <property type="entry name" value="Glycosyl_Trfase_fam3_N_dom_sf"/>
</dbReference>
<dbReference type="InterPro" id="IPR035902">
    <property type="entry name" value="Nuc_phospho_transferase"/>
</dbReference>
<dbReference type="NCBIfam" id="TIGR01245">
    <property type="entry name" value="trpD"/>
    <property type="match status" value="1"/>
</dbReference>
<dbReference type="PANTHER" id="PTHR43285">
    <property type="entry name" value="ANTHRANILATE PHOSPHORIBOSYLTRANSFERASE"/>
    <property type="match status" value="1"/>
</dbReference>
<dbReference type="PANTHER" id="PTHR43285:SF2">
    <property type="entry name" value="ANTHRANILATE PHOSPHORIBOSYLTRANSFERASE"/>
    <property type="match status" value="1"/>
</dbReference>
<dbReference type="Pfam" id="PF02885">
    <property type="entry name" value="Glycos_trans_3N"/>
    <property type="match status" value="1"/>
</dbReference>
<dbReference type="Pfam" id="PF00591">
    <property type="entry name" value="Glycos_transf_3"/>
    <property type="match status" value="1"/>
</dbReference>
<dbReference type="SUPFAM" id="SSF52418">
    <property type="entry name" value="Nucleoside phosphorylase/phosphoribosyltransferase catalytic domain"/>
    <property type="match status" value="1"/>
</dbReference>
<dbReference type="SUPFAM" id="SSF47648">
    <property type="entry name" value="Nucleoside phosphorylase/phosphoribosyltransferase N-terminal domain"/>
    <property type="match status" value="1"/>
</dbReference>